<organism>
    <name type="scientific">Thauera aromatica</name>
    <dbReference type="NCBI Taxonomy" id="59405"/>
    <lineage>
        <taxon>Bacteria</taxon>
        <taxon>Pseudomonadati</taxon>
        <taxon>Pseudomonadota</taxon>
        <taxon>Betaproteobacteria</taxon>
        <taxon>Rhodocyclales</taxon>
        <taxon>Zoogloeaceae</taxon>
        <taxon>Thauera</taxon>
    </lineage>
</organism>
<feature type="chain" id="PRO_0000134974" description="Flavin prenyltransferase UbiX">
    <location>
        <begin position="1"/>
        <end position="194"/>
    </location>
</feature>
<feature type="binding site" evidence="1">
    <location>
        <begin position="9"/>
        <end position="11"/>
    </location>
    <ligand>
        <name>FMN</name>
        <dbReference type="ChEBI" id="CHEBI:58210"/>
    </ligand>
</feature>
<feature type="binding site" evidence="1">
    <location>
        <position position="35"/>
    </location>
    <ligand>
        <name>FMN</name>
        <dbReference type="ChEBI" id="CHEBI:58210"/>
    </ligand>
</feature>
<feature type="binding site" evidence="1">
    <location>
        <begin position="86"/>
        <end position="89"/>
    </location>
    <ligand>
        <name>FMN</name>
        <dbReference type="ChEBI" id="CHEBI:58210"/>
    </ligand>
</feature>
<feature type="binding site" evidence="1">
    <location>
        <position position="121"/>
    </location>
    <ligand>
        <name>FMN</name>
        <dbReference type="ChEBI" id="CHEBI:58210"/>
    </ligand>
</feature>
<feature type="binding site" evidence="1">
    <location>
        <position position="151"/>
    </location>
    <ligand>
        <name>dimethylallyl phosphate</name>
        <dbReference type="ChEBI" id="CHEBI:88052"/>
    </ligand>
</feature>
<feature type="binding site" evidence="1">
    <location>
        <position position="167"/>
    </location>
    <ligand>
        <name>dimethylallyl phosphate</name>
        <dbReference type="ChEBI" id="CHEBI:88052"/>
    </ligand>
</feature>
<protein>
    <recommendedName>
        <fullName evidence="1">Flavin prenyltransferase UbiX</fullName>
        <ecNumber evidence="1">2.5.1.129</ecNumber>
    </recommendedName>
</protein>
<keyword id="KW-0285">Flavoprotein</keyword>
<keyword id="KW-0288">FMN</keyword>
<keyword id="KW-0637">Prenyltransferase</keyword>
<keyword id="KW-0808">Transferase</keyword>
<evidence type="ECO:0000255" key="1">
    <source>
        <dbReference type="HAMAP-Rule" id="MF_01984"/>
    </source>
</evidence>
<proteinExistence type="inferred from homology"/>
<reference key="1">
    <citation type="journal article" date="2000" name="J. Bacteriol.">
        <title>Genes involved in anaerobic metabolism of phenol in the bacterium Thauera aromatica.</title>
        <authorList>
            <person name="Breinig S."/>
            <person name="Schiltz E."/>
            <person name="Fuchs G."/>
        </authorList>
    </citation>
    <scope>NUCLEOTIDE SEQUENCE [GENOMIC DNA]</scope>
    <source>
        <strain>DSM 6984 / CIP 107765 / K172</strain>
    </source>
</reference>
<comment type="function">
    <text>Involved in the carboxylation of phenylphosphate.</text>
</comment>
<comment type="function">
    <text evidence="1">Flavin prenyltransferase that catalyzes the synthesis of the prenylated FMN cofactor (prenyl-FMN) for 4-hydroxy-3-polyprenylbenzoic acid decarboxylase UbiD. The prenyltransferase is metal-independent and links a dimethylallyl moiety from dimethylallyl monophosphate (DMAP) to the flavin N5 and C6 atoms of FMN.</text>
</comment>
<comment type="catalytic activity">
    <reaction evidence="1">
        <text>dimethylallyl phosphate + FMNH2 = prenylated FMNH2 + phosphate</text>
        <dbReference type="Rhea" id="RHEA:37743"/>
        <dbReference type="ChEBI" id="CHEBI:43474"/>
        <dbReference type="ChEBI" id="CHEBI:57618"/>
        <dbReference type="ChEBI" id="CHEBI:87467"/>
        <dbReference type="ChEBI" id="CHEBI:88052"/>
        <dbReference type="EC" id="2.5.1.129"/>
    </reaction>
</comment>
<comment type="similarity">
    <text evidence="1">Belongs to the UbiX/PAD1 family.</text>
</comment>
<dbReference type="EC" id="2.5.1.129" evidence="1"/>
<dbReference type="EMBL" id="AJ272115">
    <property type="protein sequence ID" value="CAC12692.1"/>
    <property type="molecule type" value="Genomic_DNA"/>
</dbReference>
<dbReference type="SMR" id="P57767"/>
<dbReference type="GO" id="GO:0016831">
    <property type="term" value="F:carboxy-lyase activity"/>
    <property type="evidence" value="ECO:0007669"/>
    <property type="project" value="TreeGrafter"/>
</dbReference>
<dbReference type="GO" id="GO:0106141">
    <property type="term" value="F:flavin prenyltransferase activity"/>
    <property type="evidence" value="ECO:0007669"/>
    <property type="project" value="UniProtKB-EC"/>
</dbReference>
<dbReference type="FunFam" id="3.40.50.1950:FF:000001">
    <property type="entry name" value="Flavin prenyltransferase UbiX"/>
    <property type="match status" value="1"/>
</dbReference>
<dbReference type="Gene3D" id="3.40.50.1950">
    <property type="entry name" value="Flavin prenyltransferase-like"/>
    <property type="match status" value="1"/>
</dbReference>
<dbReference type="HAMAP" id="MF_01984">
    <property type="entry name" value="ubiX_pad"/>
    <property type="match status" value="1"/>
</dbReference>
<dbReference type="InterPro" id="IPR036551">
    <property type="entry name" value="Flavin_trans-like"/>
</dbReference>
<dbReference type="InterPro" id="IPR003382">
    <property type="entry name" value="Flavoprotein"/>
</dbReference>
<dbReference type="InterPro" id="IPR004507">
    <property type="entry name" value="UbiX-like"/>
</dbReference>
<dbReference type="NCBIfam" id="NF004685">
    <property type="entry name" value="PRK06029.1"/>
    <property type="match status" value="1"/>
</dbReference>
<dbReference type="NCBIfam" id="TIGR00421">
    <property type="entry name" value="ubiX_pad"/>
    <property type="match status" value="1"/>
</dbReference>
<dbReference type="PANTHER" id="PTHR43374">
    <property type="entry name" value="FLAVIN PRENYLTRANSFERASE"/>
    <property type="match status" value="1"/>
</dbReference>
<dbReference type="PANTHER" id="PTHR43374:SF1">
    <property type="entry name" value="FLAVIN PRENYLTRANSFERASE PAD1, MITOCHONDRIAL"/>
    <property type="match status" value="1"/>
</dbReference>
<dbReference type="Pfam" id="PF02441">
    <property type="entry name" value="Flavoprotein"/>
    <property type="match status" value="1"/>
</dbReference>
<dbReference type="SUPFAM" id="SSF52507">
    <property type="entry name" value="Homo-oligomeric flavin-containing Cys decarboxylases, HFCD"/>
    <property type="match status" value="1"/>
</dbReference>
<name>UBIX_THAAR</name>
<gene>
    <name evidence="1" type="primary">ubiX</name>
</gene>
<accession>P57767</accession>
<sequence length="194" mass="21263">MRIVVGMSGASGAIYGIRILEALQRIGVETDLVMSDSAKRTIAYETDYSISDLKGLATCVHDINDVGASIASGSFRHAGMIIAPCSIKTLSAVANSFNTNLLIRAADVALKERRKLVLMLRETPLHLGHLRLMTQATENGAVLLPPLPAFYHRPKTLDDIINQSVTKVLDQFDLDVDLFGRWTGNEERELAKSR</sequence>